<keyword id="KW-0997">Cell inner membrane</keyword>
<keyword id="KW-1003">Cell membrane</keyword>
<keyword id="KW-0285">Flavoprotein</keyword>
<keyword id="KW-0288">FMN</keyword>
<keyword id="KW-0406">Ion transport</keyword>
<keyword id="KW-0472">Membrane</keyword>
<keyword id="KW-0520">NAD</keyword>
<keyword id="KW-0597">Phosphoprotein</keyword>
<keyword id="KW-0915">Sodium</keyword>
<keyword id="KW-0739">Sodium transport</keyword>
<keyword id="KW-1278">Translocase</keyword>
<keyword id="KW-0812">Transmembrane</keyword>
<keyword id="KW-1133">Transmembrane helix</keyword>
<keyword id="KW-0813">Transport</keyword>
<keyword id="KW-0830">Ubiquinone</keyword>
<organism>
    <name type="scientific">Pseudoalteromonas atlantica (strain T6c / ATCC BAA-1087)</name>
    <dbReference type="NCBI Taxonomy" id="3042615"/>
    <lineage>
        <taxon>Bacteria</taxon>
        <taxon>Pseudomonadati</taxon>
        <taxon>Pseudomonadota</taxon>
        <taxon>Gammaproteobacteria</taxon>
        <taxon>Alteromonadales</taxon>
        <taxon>Alteromonadaceae</taxon>
        <taxon>Paraglaciecola</taxon>
    </lineage>
</organism>
<dbReference type="EC" id="7.2.1.1" evidence="1"/>
<dbReference type="EMBL" id="CP000388">
    <property type="protein sequence ID" value="ABG38983.1"/>
    <property type="molecule type" value="Genomic_DNA"/>
</dbReference>
<dbReference type="RefSeq" id="WP_011573378.1">
    <property type="nucleotide sequence ID" value="NC_008228.1"/>
</dbReference>
<dbReference type="SMR" id="Q15YQ5"/>
<dbReference type="STRING" id="342610.Patl_0453"/>
<dbReference type="KEGG" id="pat:Patl_0453"/>
<dbReference type="eggNOG" id="COG1805">
    <property type="taxonomic scope" value="Bacteria"/>
</dbReference>
<dbReference type="HOGENOM" id="CLU_042020_1_1_6"/>
<dbReference type="OrthoDB" id="9776359at2"/>
<dbReference type="Proteomes" id="UP000001981">
    <property type="component" value="Chromosome"/>
</dbReference>
<dbReference type="GO" id="GO:0005886">
    <property type="term" value="C:plasma membrane"/>
    <property type="evidence" value="ECO:0007669"/>
    <property type="project" value="UniProtKB-SubCell"/>
</dbReference>
<dbReference type="GO" id="GO:0010181">
    <property type="term" value="F:FMN binding"/>
    <property type="evidence" value="ECO:0007669"/>
    <property type="project" value="InterPro"/>
</dbReference>
<dbReference type="GO" id="GO:0016655">
    <property type="term" value="F:oxidoreductase activity, acting on NAD(P)H, quinone or similar compound as acceptor"/>
    <property type="evidence" value="ECO:0007669"/>
    <property type="project" value="UniProtKB-UniRule"/>
</dbReference>
<dbReference type="GO" id="GO:0022904">
    <property type="term" value="P:respiratory electron transport chain"/>
    <property type="evidence" value="ECO:0007669"/>
    <property type="project" value="InterPro"/>
</dbReference>
<dbReference type="GO" id="GO:0006814">
    <property type="term" value="P:sodium ion transport"/>
    <property type="evidence" value="ECO:0007669"/>
    <property type="project" value="UniProtKB-UniRule"/>
</dbReference>
<dbReference type="GO" id="GO:0055085">
    <property type="term" value="P:transmembrane transport"/>
    <property type="evidence" value="ECO:0007669"/>
    <property type="project" value="InterPro"/>
</dbReference>
<dbReference type="HAMAP" id="MF_00426">
    <property type="entry name" value="NqrB"/>
    <property type="match status" value="1"/>
</dbReference>
<dbReference type="InterPro" id="IPR010966">
    <property type="entry name" value="NqrB"/>
</dbReference>
<dbReference type="InterPro" id="IPR004338">
    <property type="entry name" value="NqrB/RnfD"/>
</dbReference>
<dbReference type="NCBIfam" id="TIGR01937">
    <property type="entry name" value="nqrB"/>
    <property type="match status" value="1"/>
</dbReference>
<dbReference type="NCBIfam" id="NF003756">
    <property type="entry name" value="PRK05349.1"/>
    <property type="match status" value="1"/>
</dbReference>
<dbReference type="PANTHER" id="PTHR30578">
    <property type="entry name" value="ELECTRON TRANSPORT COMPLEX PROTEIN RNFD"/>
    <property type="match status" value="1"/>
</dbReference>
<dbReference type="PANTHER" id="PTHR30578:SF1">
    <property type="entry name" value="NA(+)-TRANSLOCATING NADH-QUINONE REDUCTASE SUBUNIT B"/>
    <property type="match status" value="1"/>
</dbReference>
<dbReference type="Pfam" id="PF03116">
    <property type="entry name" value="NQR2_RnfD_RnfE"/>
    <property type="match status" value="1"/>
</dbReference>
<dbReference type="PIRSF" id="PIRSF016055">
    <property type="entry name" value="NADH-UbQ_OxRdtase_B_su"/>
    <property type="match status" value="1"/>
</dbReference>
<proteinExistence type="inferred from homology"/>
<protein>
    <recommendedName>
        <fullName evidence="1">Na(+)-translocating NADH-quinone reductase subunit B</fullName>
        <shortName evidence="1">Na(+)-NQR subunit B</shortName>
        <shortName evidence="1">Na(+)-translocating NQR subunit B</shortName>
        <ecNumber evidence="1">7.2.1.1</ecNumber>
    </recommendedName>
    <alternativeName>
        <fullName evidence="1">NQR complex subunit B</fullName>
    </alternativeName>
    <alternativeName>
        <fullName evidence="1">NQR-1 subunit B</fullName>
    </alternativeName>
</protein>
<reference key="1">
    <citation type="submission" date="2006-06" db="EMBL/GenBank/DDBJ databases">
        <title>Complete sequence of Pseudoalteromonas atlantica T6c.</title>
        <authorList>
            <consortium name="US DOE Joint Genome Institute"/>
            <person name="Copeland A."/>
            <person name="Lucas S."/>
            <person name="Lapidus A."/>
            <person name="Barry K."/>
            <person name="Detter J.C."/>
            <person name="Glavina del Rio T."/>
            <person name="Hammon N."/>
            <person name="Israni S."/>
            <person name="Dalin E."/>
            <person name="Tice H."/>
            <person name="Pitluck S."/>
            <person name="Saunders E."/>
            <person name="Brettin T."/>
            <person name="Bruce D."/>
            <person name="Han C."/>
            <person name="Tapia R."/>
            <person name="Gilna P."/>
            <person name="Schmutz J."/>
            <person name="Larimer F."/>
            <person name="Land M."/>
            <person name="Hauser L."/>
            <person name="Kyrpides N."/>
            <person name="Kim E."/>
            <person name="Karls A.C."/>
            <person name="Bartlett D."/>
            <person name="Higgins B.P."/>
            <person name="Richardson P."/>
        </authorList>
    </citation>
    <scope>NUCLEOTIDE SEQUENCE [LARGE SCALE GENOMIC DNA]</scope>
    <source>
        <strain>T6c / ATCC BAA-1087</strain>
    </source>
</reference>
<sequence length="403" mass="43973">MGLKAYLEKIEPNFEAGGKYEKWYALYEAAATIFYTPGKVNKAGTHVRDSIDLKRIMIMVWAATFPAMFYGMYNIGQQAHNVILNGGASLPDMWQAALFTALGGQIGLESTGGLAMFLYGACFFLPIYAVTFIVGGFWEVLFASVRKHEVNEGFFVTSVLFALTLPATIPLWQVALGITFGVVIAKEVFGGTGRNFLNPALSGRAFLYFAYPAQISGDAIWTAADGFSGATWLSQAAAGNVTDWSLNADWWDAFFGNIQGSVGEVSSLAILLGGLFIIYMRIASWRIVLGVLLGGAVFSTLLNVIGSDTNAMFAMPWYWHVVTGGFAFGMFFMATDPVSASFTNSAKWAYGFLIGLMCVLIRVLNPAFPEGMMLAILFANLWAPLFDYFVAQSNIKRRMARVG</sequence>
<accession>Q15YQ5</accession>
<gene>
    <name evidence="1" type="primary">nqrB</name>
    <name type="ordered locus">Patl_0453</name>
</gene>
<feature type="chain" id="PRO_1000060142" description="Na(+)-translocating NADH-quinone reductase subunit B">
    <location>
        <begin position="1"/>
        <end position="403"/>
    </location>
</feature>
<feature type="transmembrane region" description="Helical" evidence="1">
    <location>
        <begin position="56"/>
        <end position="76"/>
    </location>
</feature>
<feature type="transmembrane region" description="Helical" evidence="1">
    <location>
        <begin position="114"/>
        <end position="134"/>
    </location>
</feature>
<feature type="transmembrane region" description="Helical" evidence="1">
    <location>
        <begin position="165"/>
        <end position="185"/>
    </location>
</feature>
<feature type="transmembrane region" description="Helical" evidence="1">
    <location>
        <begin position="260"/>
        <end position="280"/>
    </location>
</feature>
<feature type="transmembrane region" description="Helical" evidence="1">
    <location>
        <begin position="287"/>
        <end position="307"/>
    </location>
</feature>
<feature type="transmembrane region" description="Helical" evidence="1">
    <location>
        <begin position="312"/>
        <end position="332"/>
    </location>
</feature>
<feature type="transmembrane region" description="Helical" evidence="1">
    <location>
        <begin position="348"/>
        <end position="368"/>
    </location>
</feature>
<feature type="transmembrane region" description="Helical" evidence="1">
    <location>
        <begin position="371"/>
        <end position="391"/>
    </location>
</feature>
<feature type="modified residue" description="FMN phosphoryl threonine" evidence="1">
    <location>
        <position position="231"/>
    </location>
</feature>
<name>NQRB_PSEA6</name>
<comment type="function">
    <text evidence="1">NQR complex catalyzes the reduction of ubiquinone-1 to ubiquinol by two successive reactions, coupled with the transport of Na(+) ions from the cytoplasm to the periplasm. NqrA to NqrE are probably involved in the second step, the conversion of ubisemiquinone to ubiquinol.</text>
</comment>
<comment type="catalytic activity">
    <reaction evidence="1">
        <text>a ubiquinone + n Na(+)(in) + NADH + H(+) = a ubiquinol + n Na(+)(out) + NAD(+)</text>
        <dbReference type="Rhea" id="RHEA:47748"/>
        <dbReference type="Rhea" id="RHEA-COMP:9565"/>
        <dbReference type="Rhea" id="RHEA-COMP:9566"/>
        <dbReference type="ChEBI" id="CHEBI:15378"/>
        <dbReference type="ChEBI" id="CHEBI:16389"/>
        <dbReference type="ChEBI" id="CHEBI:17976"/>
        <dbReference type="ChEBI" id="CHEBI:29101"/>
        <dbReference type="ChEBI" id="CHEBI:57540"/>
        <dbReference type="ChEBI" id="CHEBI:57945"/>
        <dbReference type="EC" id="7.2.1.1"/>
    </reaction>
</comment>
<comment type="cofactor">
    <cofactor evidence="1">
        <name>FMN</name>
        <dbReference type="ChEBI" id="CHEBI:58210"/>
    </cofactor>
</comment>
<comment type="subunit">
    <text evidence="1">Composed of six subunits; NqrA, NqrB, NqrC, NqrD, NqrE and NqrF.</text>
</comment>
<comment type="subcellular location">
    <subcellularLocation>
        <location evidence="1">Cell inner membrane</location>
        <topology evidence="1">Multi-pass membrane protein</topology>
    </subcellularLocation>
</comment>
<comment type="similarity">
    <text evidence="1">Belongs to the NqrB/RnfD family.</text>
</comment>
<evidence type="ECO:0000255" key="1">
    <source>
        <dbReference type="HAMAP-Rule" id="MF_00426"/>
    </source>
</evidence>